<proteinExistence type="evidence at protein level"/>
<protein>
    <recommendedName>
        <fullName>Polypeptide N-acetylgalactosaminyltransferase 1</fullName>
        <shortName>pp-GaNTase 1</shortName>
        <ecNumber evidence="4">2.4.1.41</ecNumber>
    </recommendedName>
    <alternativeName>
        <fullName>Protein-UDP acetylgalactosaminyltransferase 1</fullName>
    </alternativeName>
    <alternativeName>
        <fullName>UDP-GalNAc:polypeptide N-acetylgalactosaminyltransferase 1</fullName>
    </alternativeName>
</protein>
<comment type="function">
    <text evidence="4">Catalyzes the initial reaction in O-linked oligosaccharide biosynthesis, the transfer of an N-acetyl-D-galactosamine residue to a serine or threonine residue on the protein receptor (PubMed:12829714). It can both act as a peptide transferase that transfers GalNAc onto unmodified peptide substrates, and as a glycopeptide transferase that requires the prior addition of a GalNAc on a peptide before adding additional GalNAc moieties. Prefers the monoglycosylated Muc5AC-3 as substrate (PubMed:12829714).</text>
</comment>
<comment type="catalytic activity">
    <reaction evidence="4">
        <text>L-seryl-[protein] + UDP-N-acetyl-alpha-D-galactosamine = a 3-O-[N-acetyl-alpha-D-galactosaminyl]-L-seryl-[protein] + UDP + H(+)</text>
        <dbReference type="Rhea" id="RHEA:23956"/>
        <dbReference type="Rhea" id="RHEA-COMP:9863"/>
        <dbReference type="Rhea" id="RHEA-COMP:12788"/>
        <dbReference type="ChEBI" id="CHEBI:15378"/>
        <dbReference type="ChEBI" id="CHEBI:29999"/>
        <dbReference type="ChEBI" id="CHEBI:53604"/>
        <dbReference type="ChEBI" id="CHEBI:58223"/>
        <dbReference type="ChEBI" id="CHEBI:67138"/>
        <dbReference type="EC" id="2.4.1.41"/>
    </reaction>
</comment>
<comment type="catalytic activity">
    <reaction evidence="4">
        <text>L-threonyl-[protein] + UDP-N-acetyl-alpha-D-galactosamine = a 3-O-[N-acetyl-alpha-D-galactosaminyl]-L-threonyl-[protein] + UDP + H(+)</text>
        <dbReference type="Rhea" id="RHEA:52424"/>
        <dbReference type="Rhea" id="RHEA-COMP:11060"/>
        <dbReference type="Rhea" id="RHEA-COMP:11689"/>
        <dbReference type="ChEBI" id="CHEBI:15378"/>
        <dbReference type="ChEBI" id="CHEBI:30013"/>
        <dbReference type="ChEBI" id="CHEBI:58223"/>
        <dbReference type="ChEBI" id="CHEBI:67138"/>
        <dbReference type="ChEBI" id="CHEBI:87075"/>
        <dbReference type="EC" id="2.4.1.41"/>
    </reaction>
</comment>
<comment type="cofactor">
    <cofactor evidence="1">
        <name>Mn(2+)</name>
        <dbReference type="ChEBI" id="CHEBI:29035"/>
    </cofactor>
</comment>
<comment type="pathway">
    <text evidence="8">Protein modification; protein glycosylation.</text>
</comment>
<comment type="subcellular location">
    <subcellularLocation>
        <location evidence="1">Golgi apparatus membrane</location>
        <topology evidence="1">Single-pass type II membrane protein</topology>
    </subcellularLocation>
</comment>
<comment type="tissue specificity">
    <text evidence="4 5">Expressed in developing oocytes and egg chambers. No expression observed during embryonic stages 9-11. During embryonic stages 12-13, specific expression is observed in the developing tracheal branches and brain. During embryonic stages 14-17, expression is restricted to the dorsal longitudinal trachea. In third instar larvae imaginal wing disk, expressed in clusters of cells in the presumptive pleura and notum. In eye-antennal imaginal disk, shows a very distinct band of expression at the morphogenetic furrow and weaker expression in the presumptive eye posterior to the furrow, no expression is detected in the presumptive antennal or head region anterior to the furrow. No expression observed in leg or haltere imaginal disks.</text>
</comment>
<comment type="developmental stage">
    <text evidence="4 5">Expressed both maternally and zygotically. Expressed throughout embryonic, larval, pupal and adult stages, with increasing levels during larval development.</text>
</comment>
<comment type="domain">
    <text evidence="1">There are two conserved domains in the glycosyltransferase region: the N-terminal domain (domain A, also called GT1 motif), which is probably involved in manganese coordination and substrate binding and the C-terminal domain (domain B, also called Gal/GalNAc-T motif), which is probably involved in catalytic reaction and UDP-Gal binding.</text>
</comment>
<comment type="domain">
    <text evidence="1">The ricin B-type lectin domain binds to GalNAc and contributes to the glycopeptide specificity.</text>
</comment>
<comment type="similarity">
    <text evidence="7">Belongs to the glycosyltransferase 2 family. GalNAc-T subfamily.</text>
</comment>
<sequence length="601" mass="68961">MLPRFRSFYGKLIIFILVALCFILYSKVQQNGSPEEPPVAPLVRAAALRGHGRERFEAYSDSENEIARPATQSPYEQIIQLDLQKQKVGLGEQGVAVHLSGAAKERGDEIYKKIALNEELSEQLTYNRSVGDHRNPLCAKQRFDSDSLPTASVVIIFFNEPYSVLLRTVHSTLSTCNEKALKEIILVDDGSDNVELGAKLDYYVRTRIPSGKVTILRLKNRLGLIRARLAGARIATGDVLIFLDAHCEGNIGWCEPLLQRIKESRTSVLVPIIDVIDANDFQYSTNGYKSFQVGGFQWNGHFDWINLPEREKQRQRRECKQEREICPAYSPTMAGGLFAIDRRYFWEVGSYDEQMDGWGGENLEMSFRIWQCGGTIETIPCSRVGHIFRDFHPYKFPNDRDTHGINTARMALVWMDEYINIFFLNRPDLKFHADIGDVTHRVMLRKKLRCKSFEWYLKNIYPEKFVPTKDVQGWGKVHAVNSNICLDDLLQNNEKPYNAGLYPCGKVLQKSQLFSFTNTNVLRNELSCATVQHSESPPYRVVMVPCMENDEFNEQWRYEHQHIIHSNTGMCLDHQGLKSLDDAQVAPCDPHSESQRWTIEH</sequence>
<dbReference type="EC" id="2.4.1.41" evidence="4"/>
<dbReference type="EMBL" id="AY268063">
    <property type="protein sequence ID" value="AAQ56699.1"/>
    <property type="molecule type" value="mRNA"/>
</dbReference>
<dbReference type="EMBL" id="AF218236">
    <property type="protein sequence ID" value="AAG13184.1"/>
    <property type="molecule type" value="mRNA"/>
</dbReference>
<dbReference type="EMBL" id="AE013599">
    <property type="protein sequence ID" value="AAM70974.1"/>
    <property type="molecule type" value="Genomic_DNA"/>
</dbReference>
<dbReference type="EMBL" id="AY113411">
    <property type="protein sequence ID" value="AAM29416.1"/>
    <property type="molecule type" value="mRNA"/>
</dbReference>
<dbReference type="RefSeq" id="NP_611043.1">
    <property type="nucleotide sequence ID" value="NM_137199.3"/>
</dbReference>
<dbReference type="RefSeq" id="NP_725472.1">
    <property type="nucleotide sequence ID" value="NM_166099.2"/>
</dbReference>
<dbReference type="SMR" id="Q6WV20"/>
<dbReference type="BioGRID" id="62452">
    <property type="interactions" value="2"/>
</dbReference>
<dbReference type="FunCoup" id="Q6WV20">
    <property type="interactions" value="337"/>
</dbReference>
<dbReference type="IntAct" id="Q6WV20">
    <property type="interactions" value="1"/>
</dbReference>
<dbReference type="STRING" id="7227.FBpp0086464"/>
<dbReference type="CAZy" id="CBM13">
    <property type="family name" value="Carbohydrate-Binding Module Family 13"/>
</dbReference>
<dbReference type="CAZy" id="GT27">
    <property type="family name" value="Glycosyltransferase Family 27"/>
</dbReference>
<dbReference type="GlyCosmos" id="Q6WV20">
    <property type="glycosylation" value="1 site, No reported glycans"/>
</dbReference>
<dbReference type="GlyGen" id="Q6WV20">
    <property type="glycosylation" value="1 site"/>
</dbReference>
<dbReference type="PaxDb" id="7227-FBpp0086464"/>
<dbReference type="DNASU" id="36717"/>
<dbReference type="EnsemblMetazoa" id="FBtr0087331">
    <property type="protein sequence ID" value="FBpp0086464"/>
    <property type="gene ID" value="FBgn0034025"/>
</dbReference>
<dbReference type="EnsemblMetazoa" id="FBtr0087332">
    <property type="protein sequence ID" value="FBpp0086465"/>
    <property type="gene ID" value="FBgn0034025"/>
</dbReference>
<dbReference type="GeneID" id="36717"/>
<dbReference type="KEGG" id="dme:Dmel_CG8182"/>
<dbReference type="AGR" id="FB:FBgn0034025"/>
<dbReference type="CTD" id="36717"/>
<dbReference type="FlyBase" id="FBgn0034025">
    <property type="gene designation" value="Pgant1"/>
</dbReference>
<dbReference type="VEuPathDB" id="VectorBase:FBgn0034025"/>
<dbReference type="eggNOG" id="KOG3736">
    <property type="taxonomic scope" value="Eukaryota"/>
</dbReference>
<dbReference type="HOGENOM" id="CLU_013477_0_1_1"/>
<dbReference type="InParanoid" id="Q6WV20"/>
<dbReference type="OMA" id="DLKFHPD"/>
<dbReference type="OrthoDB" id="416652at2759"/>
<dbReference type="PhylomeDB" id="Q6WV20"/>
<dbReference type="BRENDA" id="2.4.1.41">
    <property type="organism ID" value="1994"/>
</dbReference>
<dbReference type="Reactome" id="R-DME-190372">
    <property type="pathway name" value="FGFR3c ligand binding and activation"/>
</dbReference>
<dbReference type="Reactome" id="R-DME-913709">
    <property type="pathway name" value="O-linked glycosylation of mucins"/>
</dbReference>
<dbReference type="SignaLink" id="Q6WV20"/>
<dbReference type="UniPathway" id="UPA00378"/>
<dbReference type="BioGRID-ORCS" id="36717">
    <property type="hits" value="0 hits in 3 CRISPR screens"/>
</dbReference>
<dbReference type="GenomeRNAi" id="36717"/>
<dbReference type="PRO" id="PR:Q6WV20"/>
<dbReference type="Proteomes" id="UP000000803">
    <property type="component" value="Chromosome 2R"/>
</dbReference>
<dbReference type="Bgee" id="FBgn0034025">
    <property type="expression patterns" value="Expressed in wing disc and 105 other cell types or tissues"/>
</dbReference>
<dbReference type="ExpressionAtlas" id="Q6WV20">
    <property type="expression patterns" value="baseline and differential"/>
</dbReference>
<dbReference type="GO" id="GO:0005794">
    <property type="term" value="C:Golgi apparatus"/>
    <property type="evidence" value="ECO:0000318"/>
    <property type="project" value="GO_Central"/>
</dbReference>
<dbReference type="GO" id="GO:0000139">
    <property type="term" value="C:Golgi membrane"/>
    <property type="evidence" value="ECO:0000304"/>
    <property type="project" value="FlyBase"/>
</dbReference>
<dbReference type="GO" id="GO:0005795">
    <property type="term" value="C:Golgi stack"/>
    <property type="evidence" value="ECO:0000303"/>
    <property type="project" value="UniProtKB"/>
</dbReference>
<dbReference type="GO" id="GO:0030246">
    <property type="term" value="F:carbohydrate binding"/>
    <property type="evidence" value="ECO:0007669"/>
    <property type="project" value="UniProtKB-KW"/>
</dbReference>
<dbReference type="GO" id="GO:0046872">
    <property type="term" value="F:metal ion binding"/>
    <property type="evidence" value="ECO:0007669"/>
    <property type="project" value="UniProtKB-KW"/>
</dbReference>
<dbReference type="GO" id="GO:0004653">
    <property type="term" value="F:polypeptide N-acetylgalactosaminyltransferase activity"/>
    <property type="evidence" value="ECO:0000314"/>
    <property type="project" value="UniProtKB"/>
</dbReference>
<dbReference type="GO" id="GO:0006493">
    <property type="term" value="P:protein O-linked glycosylation"/>
    <property type="evidence" value="ECO:0000314"/>
    <property type="project" value="UniProtKB"/>
</dbReference>
<dbReference type="CDD" id="cd23459">
    <property type="entry name" value="beta-trefoil_Ricin_Pgant1-like"/>
    <property type="match status" value="1"/>
</dbReference>
<dbReference type="CDD" id="cd02510">
    <property type="entry name" value="pp-GalNAc-T"/>
    <property type="match status" value="1"/>
</dbReference>
<dbReference type="FunFam" id="2.80.10.50:FF:000100">
    <property type="entry name" value="Polypeptide N-acetylgalactosaminyltransferase"/>
    <property type="match status" value="1"/>
</dbReference>
<dbReference type="FunFam" id="3.90.550.10:FF:000021">
    <property type="entry name" value="Polypeptide N-acetylgalactosaminyltransferase"/>
    <property type="match status" value="1"/>
</dbReference>
<dbReference type="Gene3D" id="2.80.10.50">
    <property type="match status" value="1"/>
</dbReference>
<dbReference type="Gene3D" id="3.90.550.10">
    <property type="entry name" value="Spore Coat Polysaccharide Biosynthesis Protein SpsA, Chain A"/>
    <property type="match status" value="1"/>
</dbReference>
<dbReference type="InterPro" id="IPR045885">
    <property type="entry name" value="GalNAc-T"/>
</dbReference>
<dbReference type="InterPro" id="IPR001173">
    <property type="entry name" value="Glyco_trans_2-like"/>
</dbReference>
<dbReference type="InterPro" id="IPR029044">
    <property type="entry name" value="Nucleotide-diphossugar_trans"/>
</dbReference>
<dbReference type="InterPro" id="IPR035992">
    <property type="entry name" value="Ricin_B-like_lectins"/>
</dbReference>
<dbReference type="InterPro" id="IPR000772">
    <property type="entry name" value="Ricin_B_lectin"/>
</dbReference>
<dbReference type="PANTHER" id="PTHR11675">
    <property type="entry name" value="N-ACETYLGALACTOSAMINYLTRANSFERASE"/>
    <property type="match status" value="1"/>
</dbReference>
<dbReference type="PANTHER" id="PTHR11675:SF43">
    <property type="entry name" value="POLYPEPTIDE N-ACETYLGALACTOSAMINYLTRANSFERASE 1"/>
    <property type="match status" value="1"/>
</dbReference>
<dbReference type="Pfam" id="PF00535">
    <property type="entry name" value="Glycos_transf_2"/>
    <property type="match status" value="1"/>
</dbReference>
<dbReference type="Pfam" id="PF00652">
    <property type="entry name" value="Ricin_B_lectin"/>
    <property type="match status" value="1"/>
</dbReference>
<dbReference type="SMART" id="SM00458">
    <property type="entry name" value="RICIN"/>
    <property type="match status" value="1"/>
</dbReference>
<dbReference type="SUPFAM" id="SSF53448">
    <property type="entry name" value="Nucleotide-diphospho-sugar transferases"/>
    <property type="match status" value="1"/>
</dbReference>
<dbReference type="SUPFAM" id="SSF50370">
    <property type="entry name" value="Ricin B-like lectins"/>
    <property type="match status" value="1"/>
</dbReference>
<dbReference type="PROSITE" id="PS50231">
    <property type="entry name" value="RICIN_B_LECTIN"/>
    <property type="match status" value="1"/>
</dbReference>
<gene>
    <name evidence="6 9" type="primary">Pgant1</name>
    <name evidence="9" type="synonym">GalNAc-T1</name>
    <name evidence="9" type="ORF">CG8182</name>
</gene>
<organism>
    <name type="scientific">Drosophila melanogaster</name>
    <name type="common">Fruit fly</name>
    <dbReference type="NCBI Taxonomy" id="7227"/>
    <lineage>
        <taxon>Eukaryota</taxon>
        <taxon>Metazoa</taxon>
        <taxon>Ecdysozoa</taxon>
        <taxon>Arthropoda</taxon>
        <taxon>Hexapoda</taxon>
        <taxon>Insecta</taxon>
        <taxon>Pterygota</taxon>
        <taxon>Neoptera</taxon>
        <taxon>Endopterygota</taxon>
        <taxon>Diptera</taxon>
        <taxon>Brachycera</taxon>
        <taxon>Muscomorpha</taxon>
        <taxon>Ephydroidea</taxon>
        <taxon>Drosophilidae</taxon>
        <taxon>Drosophila</taxon>
        <taxon>Sophophora</taxon>
    </lineage>
</organism>
<name>GALT1_DROME</name>
<evidence type="ECO:0000250" key="1"/>
<evidence type="ECO:0000255" key="2"/>
<evidence type="ECO:0000255" key="3">
    <source>
        <dbReference type="PROSITE-ProRule" id="PRU00174"/>
    </source>
</evidence>
<evidence type="ECO:0000269" key="4">
    <source>
    </source>
</evidence>
<evidence type="ECO:0000269" key="5">
    <source>
    </source>
</evidence>
<evidence type="ECO:0000303" key="6">
    <source>
    </source>
</evidence>
<evidence type="ECO:0000305" key="7"/>
<evidence type="ECO:0000305" key="8">
    <source>
    </source>
</evidence>
<evidence type="ECO:0000312" key="9">
    <source>
        <dbReference type="FlyBase" id="FBgn0034025"/>
    </source>
</evidence>
<accession>Q6WV20</accession>
<accession>Q0E964</accession>
<accession>Q9V7C8</accession>
<feature type="chain" id="PRO_0000059155" description="Polypeptide N-acetylgalactosaminyltransferase 1">
    <location>
        <begin position="1"/>
        <end position="601"/>
    </location>
</feature>
<feature type="topological domain" description="Cytoplasmic" evidence="2">
    <location>
        <begin position="1"/>
        <end position="7"/>
    </location>
</feature>
<feature type="transmembrane region" description="Helical; Signal-anchor for type II membrane protein" evidence="2">
    <location>
        <begin position="8"/>
        <end position="28"/>
    </location>
</feature>
<feature type="topological domain" description="Lumenal" evidence="2">
    <location>
        <begin position="29"/>
        <end position="601"/>
    </location>
</feature>
<feature type="domain" description="Ricin B-type lectin" evidence="3">
    <location>
        <begin position="472"/>
        <end position="600"/>
    </location>
</feature>
<feature type="region of interest" description="Catalytic subdomain A">
    <location>
        <begin position="148"/>
        <end position="260"/>
    </location>
</feature>
<feature type="region of interest" description="Catalytic subdomain B">
    <location>
        <begin position="327"/>
        <end position="389"/>
    </location>
</feature>
<feature type="binding site" evidence="1">
    <location>
        <position position="189"/>
    </location>
    <ligand>
        <name>substrate</name>
    </ligand>
</feature>
<feature type="binding site" evidence="1">
    <location>
        <position position="221"/>
    </location>
    <ligand>
        <name>substrate</name>
    </ligand>
</feature>
<feature type="binding site" evidence="1">
    <location>
        <position position="244"/>
    </location>
    <ligand>
        <name>Mn(2+)</name>
        <dbReference type="ChEBI" id="CHEBI:29035"/>
    </ligand>
</feature>
<feature type="binding site" evidence="1">
    <location>
        <position position="246"/>
    </location>
    <ligand>
        <name>Mn(2+)</name>
        <dbReference type="ChEBI" id="CHEBI:29035"/>
    </ligand>
</feature>
<feature type="binding site" evidence="1">
    <location>
        <position position="358"/>
    </location>
    <ligand>
        <name>substrate</name>
    </ligand>
</feature>
<feature type="binding site" evidence="1">
    <location>
        <position position="386"/>
    </location>
    <ligand>
        <name>Mn(2+)</name>
        <dbReference type="ChEBI" id="CHEBI:29035"/>
    </ligand>
</feature>
<feature type="binding site" evidence="1">
    <location>
        <position position="389"/>
    </location>
    <ligand>
        <name>substrate</name>
    </ligand>
</feature>
<feature type="binding site" evidence="1">
    <location>
        <position position="392"/>
    </location>
    <ligand>
        <name>substrate</name>
    </ligand>
</feature>
<feature type="binding site" evidence="1">
    <location>
        <position position="394"/>
    </location>
    <ligand>
        <name>substrate</name>
    </ligand>
</feature>
<feature type="glycosylation site" description="N-linked (GlcNAc...) asparagine" evidence="2">
    <location>
        <position position="127"/>
    </location>
</feature>
<feature type="disulfide bond" evidence="3">
    <location>
        <begin position="138"/>
        <end position="381"/>
    </location>
</feature>
<feature type="disulfide bond" evidence="3">
    <location>
        <begin position="372"/>
        <end position="450"/>
    </location>
</feature>
<feature type="disulfide bond" evidence="3">
    <location>
        <begin position="485"/>
        <end position="504"/>
    </location>
</feature>
<feature type="disulfide bond" evidence="3">
    <location>
        <begin position="528"/>
        <end position="546"/>
    </location>
</feature>
<feature type="disulfide bond" evidence="3">
    <location>
        <begin position="571"/>
        <end position="588"/>
    </location>
</feature>
<feature type="sequence conflict" description="In Ref. 1; AAQ56699." evidence="7" ref="1">
    <original>D</original>
    <variation>E</variation>
    <location>
        <position position="146"/>
    </location>
</feature>
<keyword id="KW-1015">Disulfide bond</keyword>
<keyword id="KW-0325">Glycoprotein</keyword>
<keyword id="KW-0328">Glycosyltransferase</keyword>
<keyword id="KW-0333">Golgi apparatus</keyword>
<keyword id="KW-0430">Lectin</keyword>
<keyword id="KW-0464">Manganese</keyword>
<keyword id="KW-0472">Membrane</keyword>
<keyword id="KW-0479">Metal-binding</keyword>
<keyword id="KW-1185">Reference proteome</keyword>
<keyword id="KW-0735">Signal-anchor</keyword>
<keyword id="KW-0808">Transferase</keyword>
<keyword id="KW-0812">Transmembrane</keyword>
<keyword id="KW-1133">Transmembrane helix</keyword>
<reference key="1">
    <citation type="journal article" date="2003" name="J. Biol. Chem.">
        <title>Functional characterization and expression analysis of members of the UDP-GalNAc:polypeptide N-acetylgalactosaminyltransferase family from Drosophila melanogaster.</title>
        <authorList>
            <person name="Ten Hagen K.G."/>
            <person name="Tran D.T."/>
            <person name="Gerken T.A."/>
            <person name="Stein D.S."/>
            <person name="Zhang Z."/>
        </authorList>
    </citation>
    <scope>NUCLEOTIDE SEQUENCE [MRNA]</scope>
    <scope>FUNCTION</scope>
    <scope>CATALYTIC ACTIVITY</scope>
    <scope>PATHWAY</scope>
    <scope>TISSUE SPECIFICITY</scope>
    <scope>DEVELOPMENTAL STAGE</scope>
    <source>
        <strain>Canton-S</strain>
        <tissue>Embryo</tissue>
    </source>
</reference>
<reference key="2">
    <citation type="submission" date="1999-12" db="EMBL/GenBank/DDBJ databases">
        <title>Cloning of Drosophila protein-UDP acetylgalactosaminyltransferase.</title>
        <authorList>
            <person name="Farkas R."/>
            <person name="Medvedova L."/>
            <person name="Mechler B.M."/>
        </authorList>
    </citation>
    <scope>NUCLEOTIDE SEQUENCE [MRNA]</scope>
</reference>
<reference key="3">
    <citation type="journal article" date="2000" name="Science">
        <title>The genome sequence of Drosophila melanogaster.</title>
        <authorList>
            <person name="Adams M.D."/>
            <person name="Celniker S.E."/>
            <person name="Holt R.A."/>
            <person name="Evans C.A."/>
            <person name="Gocayne J.D."/>
            <person name="Amanatides P.G."/>
            <person name="Scherer S.E."/>
            <person name="Li P.W."/>
            <person name="Hoskins R.A."/>
            <person name="Galle R.F."/>
            <person name="George R.A."/>
            <person name="Lewis S.E."/>
            <person name="Richards S."/>
            <person name="Ashburner M."/>
            <person name="Henderson S.N."/>
            <person name="Sutton G.G."/>
            <person name="Wortman J.R."/>
            <person name="Yandell M.D."/>
            <person name="Zhang Q."/>
            <person name="Chen L.X."/>
            <person name="Brandon R.C."/>
            <person name="Rogers Y.-H.C."/>
            <person name="Blazej R.G."/>
            <person name="Champe M."/>
            <person name="Pfeiffer B.D."/>
            <person name="Wan K.H."/>
            <person name="Doyle C."/>
            <person name="Baxter E.G."/>
            <person name="Helt G."/>
            <person name="Nelson C.R."/>
            <person name="Miklos G.L.G."/>
            <person name="Abril J.F."/>
            <person name="Agbayani A."/>
            <person name="An H.-J."/>
            <person name="Andrews-Pfannkoch C."/>
            <person name="Baldwin D."/>
            <person name="Ballew R.M."/>
            <person name="Basu A."/>
            <person name="Baxendale J."/>
            <person name="Bayraktaroglu L."/>
            <person name="Beasley E.M."/>
            <person name="Beeson K.Y."/>
            <person name="Benos P.V."/>
            <person name="Berman B.P."/>
            <person name="Bhandari D."/>
            <person name="Bolshakov S."/>
            <person name="Borkova D."/>
            <person name="Botchan M.R."/>
            <person name="Bouck J."/>
            <person name="Brokstein P."/>
            <person name="Brottier P."/>
            <person name="Burtis K.C."/>
            <person name="Busam D.A."/>
            <person name="Butler H."/>
            <person name="Cadieu E."/>
            <person name="Center A."/>
            <person name="Chandra I."/>
            <person name="Cherry J.M."/>
            <person name="Cawley S."/>
            <person name="Dahlke C."/>
            <person name="Davenport L.B."/>
            <person name="Davies P."/>
            <person name="de Pablos B."/>
            <person name="Delcher A."/>
            <person name="Deng Z."/>
            <person name="Mays A.D."/>
            <person name="Dew I."/>
            <person name="Dietz S.M."/>
            <person name="Dodson K."/>
            <person name="Doup L.E."/>
            <person name="Downes M."/>
            <person name="Dugan-Rocha S."/>
            <person name="Dunkov B.C."/>
            <person name="Dunn P."/>
            <person name="Durbin K.J."/>
            <person name="Evangelista C.C."/>
            <person name="Ferraz C."/>
            <person name="Ferriera S."/>
            <person name="Fleischmann W."/>
            <person name="Fosler C."/>
            <person name="Gabrielian A.E."/>
            <person name="Garg N.S."/>
            <person name="Gelbart W.M."/>
            <person name="Glasser K."/>
            <person name="Glodek A."/>
            <person name="Gong F."/>
            <person name="Gorrell J.H."/>
            <person name="Gu Z."/>
            <person name="Guan P."/>
            <person name="Harris M."/>
            <person name="Harris N.L."/>
            <person name="Harvey D.A."/>
            <person name="Heiman T.J."/>
            <person name="Hernandez J.R."/>
            <person name="Houck J."/>
            <person name="Hostin D."/>
            <person name="Houston K.A."/>
            <person name="Howland T.J."/>
            <person name="Wei M.-H."/>
            <person name="Ibegwam C."/>
            <person name="Jalali M."/>
            <person name="Kalush F."/>
            <person name="Karpen G.H."/>
            <person name="Ke Z."/>
            <person name="Kennison J.A."/>
            <person name="Ketchum K.A."/>
            <person name="Kimmel B.E."/>
            <person name="Kodira C.D."/>
            <person name="Kraft C.L."/>
            <person name="Kravitz S."/>
            <person name="Kulp D."/>
            <person name="Lai Z."/>
            <person name="Lasko P."/>
            <person name="Lei Y."/>
            <person name="Levitsky A.A."/>
            <person name="Li J.H."/>
            <person name="Li Z."/>
            <person name="Liang Y."/>
            <person name="Lin X."/>
            <person name="Liu X."/>
            <person name="Mattei B."/>
            <person name="McIntosh T.C."/>
            <person name="McLeod M.P."/>
            <person name="McPherson D."/>
            <person name="Merkulov G."/>
            <person name="Milshina N.V."/>
            <person name="Mobarry C."/>
            <person name="Morris J."/>
            <person name="Moshrefi A."/>
            <person name="Mount S.M."/>
            <person name="Moy M."/>
            <person name="Murphy B."/>
            <person name="Murphy L."/>
            <person name="Muzny D.M."/>
            <person name="Nelson D.L."/>
            <person name="Nelson D.R."/>
            <person name="Nelson K.A."/>
            <person name="Nixon K."/>
            <person name="Nusskern D.R."/>
            <person name="Pacleb J.M."/>
            <person name="Palazzolo M."/>
            <person name="Pittman G.S."/>
            <person name="Pan S."/>
            <person name="Pollard J."/>
            <person name="Puri V."/>
            <person name="Reese M.G."/>
            <person name="Reinert K."/>
            <person name="Remington K."/>
            <person name="Saunders R.D.C."/>
            <person name="Scheeler F."/>
            <person name="Shen H."/>
            <person name="Shue B.C."/>
            <person name="Siden-Kiamos I."/>
            <person name="Simpson M."/>
            <person name="Skupski M.P."/>
            <person name="Smith T.J."/>
            <person name="Spier E."/>
            <person name="Spradling A.C."/>
            <person name="Stapleton M."/>
            <person name="Strong R."/>
            <person name="Sun E."/>
            <person name="Svirskas R."/>
            <person name="Tector C."/>
            <person name="Turner R."/>
            <person name="Venter E."/>
            <person name="Wang A.H."/>
            <person name="Wang X."/>
            <person name="Wang Z.-Y."/>
            <person name="Wassarman D.A."/>
            <person name="Weinstock G.M."/>
            <person name="Weissenbach J."/>
            <person name="Williams S.M."/>
            <person name="Woodage T."/>
            <person name="Worley K.C."/>
            <person name="Wu D."/>
            <person name="Yang S."/>
            <person name="Yao Q.A."/>
            <person name="Ye J."/>
            <person name="Yeh R.-F."/>
            <person name="Zaveri J.S."/>
            <person name="Zhan M."/>
            <person name="Zhang G."/>
            <person name="Zhao Q."/>
            <person name="Zheng L."/>
            <person name="Zheng X.H."/>
            <person name="Zhong F.N."/>
            <person name="Zhong W."/>
            <person name="Zhou X."/>
            <person name="Zhu S.C."/>
            <person name="Zhu X."/>
            <person name="Smith H.O."/>
            <person name="Gibbs R.A."/>
            <person name="Myers E.W."/>
            <person name="Rubin G.M."/>
            <person name="Venter J.C."/>
        </authorList>
    </citation>
    <scope>NUCLEOTIDE SEQUENCE [LARGE SCALE GENOMIC DNA]</scope>
    <source>
        <strain>Berkeley</strain>
    </source>
</reference>
<reference key="4">
    <citation type="journal article" date="2002" name="Genome Biol.">
        <title>Annotation of the Drosophila melanogaster euchromatic genome: a systematic review.</title>
        <authorList>
            <person name="Misra S."/>
            <person name="Crosby M.A."/>
            <person name="Mungall C.J."/>
            <person name="Matthews B.B."/>
            <person name="Campbell K.S."/>
            <person name="Hradecky P."/>
            <person name="Huang Y."/>
            <person name="Kaminker J.S."/>
            <person name="Millburn G.H."/>
            <person name="Prochnik S.E."/>
            <person name="Smith C.D."/>
            <person name="Tupy J.L."/>
            <person name="Whitfield E.J."/>
            <person name="Bayraktaroglu L."/>
            <person name="Berman B.P."/>
            <person name="Bettencourt B.R."/>
            <person name="Celniker S.E."/>
            <person name="de Grey A.D.N.J."/>
            <person name="Drysdale R.A."/>
            <person name="Harris N.L."/>
            <person name="Richter J."/>
            <person name="Russo S."/>
            <person name="Schroeder A.J."/>
            <person name="Shu S.Q."/>
            <person name="Stapleton M."/>
            <person name="Yamada C."/>
            <person name="Ashburner M."/>
            <person name="Gelbart W.M."/>
            <person name="Rubin G.M."/>
            <person name="Lewis S.E."/>
        </authorList>
    </citation>
    <scope>GENOME REANNOTATION</scope>
    <source>
        <strain>Berkeley</strain>
    </source>
</reference>
<reference key="5">
    <citation type="journal article" date="2002" name="Genome Biol.">
        <title>A Drosophila full-length cDNA resource.</title>
        <authorList>
            <person name="Stapleton M."/>
            <person name="Carlson J.W."/>
            <person name="Brokstein P."/>
            <person name="Yu C."/>
            <person name="Champe M."/>
            <person name="George R.A."/>
            <person name="Guarin H."/>
            <person name="Kronmiller B."/>
            <person name="Pacleb J.M."/>
            <person name="Park S."/>
            <person name="Wan K.H."/>
            <person name="Rubin G.M."/>
            <person name="Celniker S.E."/>
        </authorList>
    </citation>
    <scope>NUCLEOTIDE SEQUENCE [LARGE SCALE MRNA]</scope>
    <source>
        <strain>Berkeley</strain>
        <tissue>Embryo</tissue>
    </source>
</reference>
<reference key="6">
    <citation type="journal article" date="2006" name="Glycobiology">
        <title>Expression of the UDP-GalNAc: polypeptide N-acetylgalactosaminyltransferase family is spatially and temporally regulated during Drosophila development.</title>
        <authorList>
            <person name="Tian E."/>
            <person name="Ten Hagen K.G."/>
        </authorList>
    </citation>
    <scope>TISSUE SPECIFICITY</scope>
    <scope>DEVELOPMENTAL STAGE</scope>
</reference>